<organism>
    <name type="scientific">Homo sapiens</name>
    <name type="common">Human</name>
    <dbReference type="NCBI Taxonomy" id="9606"/>
    <lineage>
        <taxon>Eukaryota</taxon>
        <taxon>Metazoa</taxon>
        <taxon>Chordata</taxon>
        <taxon>Craniata</taxon>
        <taxon>Vertebrata</taxon>
        <taxon>Euteleostomi</taxon>
        <taxon>Mammalia</taxon>
        <taxon>Eutheria</taxon>
        <taxon>Euarchontoglires</taxon>
        <taxon>Primates</taxon>
        <taxon>Haplorrhini</taxon>
        <taxon>Catarrhini</taxon>
        <taxon>Hominidae</taxon>
        <taxon>Homo</taxon>
    </lineage>
</organism>
<evidence type="ECO:0000250" key="1">
    <source>
        <dbReference type="UniProtKB" id="P46965"/>
    </source>
</evidence>
<evidence type="ECO:0000250" key="2">
    <source>
        <dbReference type="UniProtKB" id="P83362"/>
    </source>
</evidence>
<evidence type="ECO:0000255" key="3"/>
<evidence type="ECO:0000256" key="4">
    <source>
        <dbReference type="SAM" id="MobiDB-lite"/>
    </source>
</evidence>
<evidence type="ECO:0000269" key="5">
    <source>
    </source>
</evidence>
<evidence type="ECO:0000269" key="6">
    <source>
    </source>
</evidence>
<evidence type="ECO:0000269" key="7">
    <source>
    </source>
</evidence>
<evidence type="ECO:0000269" key="8">
    <source>
    </source>
</evidence>
<evidence type="ECO:0000305" key="9"/>
<evidence type="ECO:0007744" key="10">
    <source>
        <dbReference type="PDB" id="7P2P"/>
    </source>
</evidence>
<evidence type="ECO:0007744" key="11">
    <source>
        <dbReference type="PDB" id="7P2Q"/>
    </source>
</evidence>
<sequence>MARGGDTGCTGPSETSASGAAAIALPGLEGPATDAQCQTLPLTVLKSRSPSPRSLPPALSCPPPQPAMLEHLSSLPTQMDYKGQKLAEQMFQGIILFSAIVGFIYGYVAEQFGWTVYIVMAGFAFSCLLTLPPWPIYRRHPLKWLPVQESSTDDKKPGERKIKRHAKNN</sequence>
<dbReference type="EMBL" id="AC104446">
    <property type="status" value="NOT_ANNOTATED_CDS"/>
    <property type="molecule type" value="Genomic_DNA"/>
</dbReference>
<dbReference type="EMBL" id="CH471055">
    <property type="protein sequence ID" value="EAW65257.1"/>
    <property type="molecule type" value="Genomic_DNA"/>
</dbReference>
<dbReference type="EMBL" id="AF092138">
    <property type="protein sequence ID" value="AAD40380.1"/>
    <property type="status" value="ALT_FRAME"/>
    <property type="molecule type" value="mRNA"/>
</dbReference>
<dbReference type="EMBL" id="AK027426">
    <property type="protein sequence ID" value="BAG51320.1"/>
    <property type="status" value="ALT_INIT"/>
    <property type="molecule type" value="mRNA"/>
</dbReference>
<dbReference type="EMBL" id="L38852">
    <property type="protein sequence ID" value="AAL31361.1"/>
    <property type="status" value="ALT_INIT"/>
    <property type="molecule type" value="mRNA"/>
</dbReference>
<dbReference type="EMBL" id="BC000884">
    <property type="protein sequence ID" value="AAH00884.1"/>
    <property type="status" value="ALT_INIT"/>
    <property type="molecule type" value="mRNA"/>
</dbReference>
<dbReference type="RefSeq" id="NP_054760.3">
    <property type="nucleotide sequence ID" value="NM_014041.3"/>
</dbReference>
<dbReference type="PDB" id="7P2P">
    <property type="method" value="EM"/>
    <property type="resolution" value="4.90 A"/>
    <property type="chains" value="D=1-169"/>
</dbReference>
<dbReference type="PDB" id="7P2Q">
    <property type="method" value="EM"/>
    <property type="resolution" value="4.90 A"/>
    <property type="chains" value="D=1-169"/>
</dbReference>
<dbReference type="PDBsum" id="7P2P"/>
<dbReference type="PDBsum" id="7P2Q"/>
<dbReference type="EMDB" id="EMD-13171"/>
<dbReference type="EMDB" id="EMD-13172"/>
<dbReference type="SMR" id="Q9Y6A9"/>
<dbReference type="BioGRID" id="118796">
    <property type="interactions" value="158"/>
</dbReference>
<dbReference type="ComplexPortal" id="CPX-2847">
    <property type="entry name" value="Signal peptidase complex, SEC11A variant"/>
</dbReference>
<dbReference type="ComplexPortal" id="CPX-7205">
    <property type="entry name" value="Signal peptidase complex, SEC11C variant"/>
</dbReference>
<dbReference type="FunCoup" id="Q9Y6A9">
    <property type="interactions" value="582"/>
</dbReference>
<dbReference type="IntAct" id="Q9Y6A9">
    <property type="interactions" value="120"/>
</dbReference>
<dbReference type="MINT" id="Q9Y6A9"/>
<dbReference type="STRING" id="9606.ENSP00000233025"/>
<dbReference type="GlyGen" id="Q9Y6A9">
    <property type="glycosylation" value="1 site, 1 O-linked glycan (1 site)"/>
</dbReference>
<dbReference type="iPTMnet" id="Q9Y6A9"/>
<dbReference type="PhosphoSitePlus" id="Q9Y6A9"/>
<dbReference type="SwissPalm" id="Q9Y6A9"/>
<dbReference type="BioMuta" id="SPCS1"/>
<dbReference type="DMDM" id="557952606"/>
<dbReference type="jPOST" id="Q9Y6A9"/>
<dbReference type="MassIVE" id="Q9Y6A9"/>
<dbReference type="PaxDb" id="9606-ENSP00000478310"/>
<dbReference type="PeptideAtlas" id="Q9Y6A9"/>
<dbReference type="ProteomicsDB" id="86643"/>
<dbReference type="Pumba" id="Q9Y6A9"/>
<dbReference type="TopDownProteomics" id="Q9Y6A9"/>
<dbReference type="Antibodypedia" id="46194">
    <property type="antibodies" value="81 antibodies from 17 providers"/>
</dbReference>
<dbReference type="DNASU" id="28972"/>
<dbReference type="Ensembl" id="ENST00000233025.11">
    <property type="protein sequence ID" value="ENSP00000233025.7"/>
    <property type="gene ID" value="ENSG00000114902.14"/>
</dbReference>
<dbReference type="GeneID" id="28972"/>
<dbReference type="KEGG" id="hsa:28972"/>
<dbReference type="UCSC" id="uc011bei.3">
    <property type="organism name" value="human"/>
</dbReference>
<dbReference type="UCSC" id="uc062kpj.1">
    <property type="organism name" value="human"/>
</dbReference>
<dbReference type="AGR" id="HGNC:23401"/>
<dbReference type="CTD" id="28972"/>
<dbReference type="DisGeNET" id="28972"/>
<dbReference type="GeneCards" id="SPCS1"/>
<dbReference type="HGNC" id="HGNC:23401">
    <property type="gene designation" value="SPCS1"/>
</dbReference>
<dbReference type="HPA" id="ENSG00000114902">
    <property type="expression patterns" value="Low tissue specificity"/>
</dbReference>
<dbReference type="MIM" id="610358">
    <property type="type" value="gene"/>
</dbReference>
<dbReference type="neXtProt" id="NX_Q9Y6A9"/>
<dbReference type="OpenTargets" id="ENSG00000114902"/>
<dbReference type="PharmGKB" id="PA134972486"/>
<dbReference type="VEuPathDB" id="HostDB:ENSG00000114902"/>
<dbReference type="eggNOG" id="KOG4112">
    <property type="taxonomic scope" value="Eukaryota"/>
</dbReference>
<dbReference type="GeneTree" id="ENSGT00390000018321"/>
<dbReference type="HOGENOM" id="CLU_134505_1_0_1"/>
<dbReference type="InParanoid" id="Q9Y6A9"/>
<dbReference type="OrthoDB" id="263893at2759"/>
<dbReference type="PAN-GO" id="Q9Y6A9">
    <property type="GO annotations" value="4 GO annotations based on evolutionary models"/>
</dbReference>
<dbReference type="PhylomeDB" id="Q9Y6A9"/>
<dbReference type="TreeFam" id="TF106122"/>
<dbReference type="PathwayCommons" id="Q9Y6A9"/>
<dbReference type="Reactome" id="R-HSA-1799339">
    <property type="pathway name" value="SRP-dependent cotranslational protein targeting to membrane"/>
</dbReference>
<dbReference type="Reactome" id="R-HSA-381771">
    <property type="pathway name" value="Synthesis, secretion, and inactivation of Glucagon-like Peptide-1 (GLP-1)"/>
</dbReference>
<dbReference type="Reactome" id="R-HSA-400511">
    <property type="pathway name" value="Synthesis, secretion, and inactivation of Glucose-dependent Insulinotropic Polypeptide (GIP)"/>
</dbReference>
<dbReference type="Reactome" id="R-HSA-422085">
    <property type="pathway name" value="Synthesis, secretion, and deacylation of Ghrelin"/>
</dbReference>
<dbReference type="Reactome" id="R-HSA-9828806">
    <property type="pathway name" value="Maturation of hRSV A proteins"/>
</dbReference>
<dbReference type="SignaLink" id="Q9Y6A9"/>
<dbReference type="BioGRID-ORCS" id="28972">
    <property type="hits" value="50 hits in 1157 CRISPR screens"/>
</dbReference>
<dbReference type="ChiTaRS" id="SPCS1">
    <property type="organism name" value="human"/>
</dbReference>
<dbReference type="GenomeRNAi" id="28972"/>
<dbReference type="Pharos" id="Q9Y6A9">
    <property type="development level" value="Tbio"/>
</dbReference>
<dbReference type="PRO" id="PR:Q9Y6A9"/>
<dbReference type="Proteomes" id="UP000005640">
    <property type="component" value="Chromosome 3"/>
</dbReference>
<dbReference type="RNAct" id="Q9Y6A9">
    <property type="molecule type" value="protein"/>
</dbReference>
<dbReference type="Bgee" id="ENSG00000114902">
    <property type="expression patterns" value="Expressed in sperm and 206 other cell types or tissues"/>
</dbReference>
<dbReference type="ExpressionAtlas" id="Q9Y6A9">
    <property type="expression patterns" value="baseline and differential"/>
</dbReference>
<dbReference type="GO" id="GO:0005789">
    <property type="term" value="C:endoplasmic reticulum membrane"/>
    <property type="evidence" value="ECO:0000314"/>
    <property type="project" value="UniProtKB"/>
</dbReference>
<dbReference type="GO" id="GO:0005787">
    <property type="term" value="C:signal peptidase complex"/>
    <property type="evidence" value="ECO:0000353"/>
    <property type="project" value="ComplexPortal"/>
</dbReference>
<dbReference type="GO" id="GO:0045047">
    <property type="term" value="P:protein targeting to ER"/>
    <property type="evidence" value="ECO:0000318"/>
    <property type="project" value="GO_Central"/>
</dbReference>
<dbReference type="GO" id="GO:0006508">
    <property type="term" value="P:proteolysis"/>
    <property type="evidence" value="ECO:0000304"/>
    <property type="project" value="UniProtKB"/>
</dbReference>
<dbReference type="GO" id="GO:0006465">
    <property type="term" value="P:signal peptide processing"/>
    <property type="evidence" value="ECO:0000314"/>
    <property type="project" value="ComplexPortal"/>
</dbReference>
<dbReference type="GO" id="GO:0019082">
    <property type="term" value="P:viral protein processing"/>
    <property type="evidence" value="ECO:0000315"/>
    <property type="project" value="UniProtKB"/>
</dbReference>
<dbReference type="GO" id="GO:0019068">
    <property type="term" value="P:virion assembly"/>
    <property type="evidence" value="ECO:0000315"/>
    <property type="project" value="UniProtKB"/>
</dbReference>
<dbReference type="InterPro" id="IPR009542">
    <property type="entry name" value="Spc1/SPCS1"/>
</dbReference>
<dbReference type="PANTHER" id="PTHR13202">
    <property type="entry name" value="MICROSOMAL SIGNAL PEPTIDASE 12 KDA SUBUNIT"/>
    <property type="match status" value="1"/>
</dbReference>
<dbReference type="PANTHER" id="PTHR13202:SF0">
    <property type="entry name" value="SIGNAL PEPTIDASE COMPLEX SUBUNIT 1"/>
    <property type="match status" value="1"/>
</dbReference>
<dbReference type="Pfam" id="PF06645">
    <property type="entry name" value="SPC12"/>
    <property type="match status" value="1"/>
</dbReference>
<feature type="chain" id="PRO_0000215154" description="Signal peptidase complex subunit 1">
    <location>
        <begin position="1"/>
        <end position="169"/>
    </location>
</feature>
<feature type="topological domain" description="Cytoplasmic" evidence="2">
    <location>
        <begin position="1"/>
        <end position="93"/>
    </location>
</feature>
<feature type="transmembrane region" description="Helical" evidence="3">
    <location>
        <begin position="94"/>
        <end position="114"/>
    </location>
</feature>
<feature type="topological domain" description="Lumenal" evidence="2">
    <location>
        <position position="115"/>
    </location>
</feature>
<feature type="transmembrane region" description="Helical" evidence="3">
    <location>
        <begin position="116"/>
        <end position="136"/>
    </location>
</feature>
<feature type="topological domain" description="Cytoplasmic" evidence="2">
    <location>
        <begin position="137"/>
        <end position="169"/>
    </location>
</feature>
<feature type="region of interest" description="(Microbial infection) Interaction with JEV NS2B" evidence="7">
    <location>
        <begin position="91"/>
        <end position="169"/>
    </location>
</feature>
<feature type="region of interest" description="(Microbial infection) Interaction with HCV NS2 and HCV E2" evidence="5">
    <location>
        <begin position="110"/>
        <end position="169"/>
    </location>
</feature>
<feature type="region of interest" description="Disordered" evidence="4">
    <location>
        <begin position="148"/>
        <end position="169"/>
    </location>
</feature>
<feature type="sequence conflict" description="In Ref. 6; AAH00884." evidence="9" ref="6">
    <original>P</original>
    <variation>A</variation>
    <location>
        <position position="41"/>
    </location>
</feature>
<feature type="sequence conflict" description="In Ref. 5; AAL31361." evidence="9" ref="5">
    <original>I</original>
    <variation>Y</variation>
    <location>
        <position position="95"/>
    </location>
</feature>
<feature type="sequence conflict" description="In Ref. 6; AAH00884." evidence="9" ref="6">
    <original>L</original>
    <variation>LAQ</variation>
    <location>
        <position position="128"/>
    </location>
</feature>
<reference key="1">
    <citation type="journal article" date="2006" name="Nature">
        <title>The DNA sequence, annotation and analysis of human chromosome 3.</title>
        <authorList>
            <person name="Muzny D.M."/>
            <person name="Scherer S.E."/>
            <person name="Kaul R."/>
            <person name="Wang J."/>
            <person name="Yu J."/>
            <person name="Sudbrak R."/>
            <person name="Buhay C.J."/>
            <person name="Chen R."/>
            <person name="Cree A."/>
            <person name="Ding Y."/>
            <person name="Dugan-Rocha S."/>
            <person name="Gill R."/>
            <person name="Gunaratne P."/>
            <person name="Harris R.A."/>
            <person name="Hawes A.C."/>
            <person name="Hernandez J."/>
            <person name="Hodgson A.V."/>
            <person name="Hume J."/>
            <person name="Jackson A."/>
            <person name="Khan Z.M."/>
            <person name="Kovar-Smith C."/>
            <person name="Lewis L.R."/>
            <person name="Lozado R.J."/>
            <person name="Metzker M.L."/>
            <person name="Milosavljevic A."/>
            <person name="Miner G.R."/>
            <person name="Morgan M.B."/>
            <person name="Nazareth L.V."/>
            <person name="Scott G."/>
            <person name="Sodergren E."/>
            <person name="Song X.-Z."/>
            <person name="Steffen D."/>
            <person name="Wei S."/>
            <person name="Wheeler D.A."/>
            <person name="Wright M.W."/>
            <person name="Worley K.C."/>
            <person name="Yuan Y."/>
            <person name="Zhang Z."/>
            <person name="Adams C.Q."/>
            <person name="Ansari-Lari M.A."/>
            <person name="Ayele M."/>
            <person name="Brown M.J."/>
            <person name="Chen G."/>
            <person name="Chen Z."/>
            <person name="Clendenning J."/>
            <person name="Clerc-Blankenburg K.P."/>
            <person name="Chen R."/>
            <person name="Chen Z."/>
            <person name="Davis C."/>
            <person name="Delgado O."/>
            <person name="Dinh H.H."/>
            <person name="Dong W."/>
            <person name="Draper H."/>
            <person name="Ernst S."/>
            <person name="Fu G."/>
            <person name="Gonzalez-Garay M.L."/>
            <person name="Garcia D.K."/>
            <person name="Gillett W."/>
            <person name="Gu J."/>
            <person name="Hao B."/>
            <person name="Haugen E."/>
            <person name="Havlak P."/>
            <person name="He X."/>
            <person name="Hennig S."/>
            <person name="Hu S."/>
            <person name="Huang W."/>
            <person name="Jackson L.R."/>
            <person name="Jacob L.S."/>
            <person name="Kelly S.H."/>
            <person name="Kube M."/>
            <person name="Levy R."/>
            <person name="Li Z."/>
            <person name="Liu B."/>
            <person name="Liu J."/>
            <person name="Liu W."/>
            <person name="Lu J."/>
            <person name="Maheshwari M."/>
            <person name="Nguyen B.-V."/>
            <person name="Okwuonu G.O."/>
            <person name="Palmeiri A."/>
            <person name="Pasternak S."/>
            <person name="Perez L.M."/>
            <person name="Phelps K.A."/>
            <person name="Plopper F.J."/>
            <person name="Qiang B."/>
            <person name="Raymond C."/>
            <person name="Rodriguez R."/>
            <person name="Saenphimmachak C."/>
            <person name="Santibanez J."/>
            <person name="Shen H."/>
            <person name="Shen Y."/>
            <person name="Subramanian S."/>
            <person name="Tabor P.E."/>
            <person name="Verduzco D."/>
            <person name="Waldron L."/>
            <person name="Wang J."/>
            <person name="Wang J."/>
            <person name="Wang Q."/>
            <person name="Williams G.A."/>
            <person name="Wong G.K.-S."/>
            <person name="Yao Z."/>
            <person name="Zhang J."/>
            <person name="Zhang X."/>
            <person name="Zhao G."/>
            <person name="Zhou J."/>
            <person name="Zhou Y."/>
            <person name="Nelson D."/>
            <person name="Lehrach H."/>
            <person name="Reinhardt R."/>
            <person name="Naylor S.L."/>
            <person name="Yang H."/>
            <person name="Olson M."/>
            <person name="Weinstock G."/>
            <person name="Gibbs R.A."/>
        </authorList>
    </citation>
    <scope>NUCLEOTIDE SEQUENCE [LARGE SCALE GENOMIC DNA]</scope>
</reference>
<reference key="2">
    <citation type="submission" date="2005-07" db="EMBL/GenBank/DDBJ databases">
        <authorList>
            <person name="Mural R.J."/>
            <person name="Istrail S."/>
            <person name="Sutton G.G."/>
            <person name="Florea L."/>
            <person name="Halpern A.L."/>
            <person name="Mobarry C.M."/>
            <person name="Lippert R."/>
            <person name="Walenz B."/>
            <person name="Shatkay H."/>
            <person name="Dew I."/>
            <person name="Miller J.R."/>
            <person name="Flanigan M.J."/>
            <person name="Edwards N.J."/>
            <person name="Bolanos R."/>
            <person name="Fasulo D."/>
            <person name="Halldorsson B.V."/>
            <person name="Hannenhalli S."/>
            <person name="Turner R."/>
            <person name="Yooseph S."/>
            <person name="Lu F."/>
            <person name="Nusskern D.R."/>
            <person name="Shue B.C."/>
            <person name="Zheng X.H."/>
            <person name="Zhong F."/>
            <person name="Delcher A.L."/>
            <person name="Huson D.H."/>
            <person name="Kravitz S.A."/>
            <person name="Mouchard L."/>
            <person name="Reinert K."/>
            <person name="Remington K.A."/>
            <person name="Clark A.G."/>
            <person name="Waterman M.S."/>
            <person name="Eichler E.E."/>
            <person name="Adams M.D."/>
            <person name="Hunkapiller M.W."/>
            <person name="Myers E.W."/>
            <person name="Venter J.C."/>
        </authorList>
    </citation>
    <scope>NUCLEOTIDE SEQUENCE [LARGE SCALE GENOMIC DNA]</scope>
</reference>
<reference key="3">
    <citation type="journal article" date="2000" name="Genome Res.">
        <title>Cloning and functional analysis of cDNAs with open reading frames for 300 previously undefined genes expressed in CD34+ hematopoietic stem/progenitor cells.</title>
        <authorList>
            <person name="Zhang Q.-H."/>
            <person name="Ye M."/>
            <person name="Wu X.-Y."/>
            <person name="Ren S.-X."/>
            <person name="Zhao M."/>
            <person name="Zhao C.-J."/>
            <person name="Fu G."/>
            <person name="Shen Y."/>
            <person name="Fan H.-Y."/>
            <person name="Lu G."/>
            <person name="Zhong M."/>
            <person name="Xu X.-R."/>
            <person name="Han Z.-G."/>
            <person name="Zhang J.-W."/>
            <person name="Tao J."/>
            <person name="Huang Q.-H."/>
            <person name="Zhou J."/>
            <person name="Hu G.-X."/>
            <person name="Gu J."/>
            <person name="Chen S.-J."/>
            <person name="Chen Z."/>
        </authorList>
    </citation>
    <scope>NUCLEOTIDE SEQUENCE [LARGE SCALE MRNA] OF 23-169</scope>
    <source>
        <tissue>Umbilical cord blood</tissue>
    </source>
</reference>
<reference key="4">
    <citation type="journal article" date="2004" name="Nat. Genet.">
        <title>Complete sequencing and characterization of 21,243 full-length human cDNAs.</title>
        <authorList>
            <person name="Ota T."/>
            <person name="Suzuki Y."/>
            <person name="Nishikawa T."/>
            <person name="Otsuki T."/>
            <person name="Sugiyama T."/>
            <person name="Irie R."/>
            <person name="Wakamatsu A."/>
            <person name="Hayashi K."/>
            <person name="Sato H."/>
            <person name="Nagai K."/>
            <person name="Kimura K."/>
            <person name="Makita H."/>
            <person name="Sekine M."/>
            <person name="Obayashi M."/>
            <person name="Nishi T."/>
            <person name="Shibahara T."/>
            <person name="Tanaka T."/>
            <person name="Ishii S."/>
            <person name="Yamamoto J."/>
            <person name="Saito K."/>
            <person name="Kawai Y."/>
            <person name="Isono Y."/>
            <person name="Nakamura Y."/>
            <person name="Nagahari K."/>
            <person name="Murakami K."/>
            <person name="Yasuda T."/>
            <person name="Iwayanagi T."/>
            <person name="Wagatsuma M."/>
            <person name="Shiratori A."/>
            <person name="Sudo H."/>
            <person name="Hosoiri T."/>
            <person name="Kaku Y."/>
            <person name="Kodaira H."/>
            <person name="Kondo H."/>
            <person name="Sugawara M."/>
            <person name="Takahashi M."/>
            <person name="Kanda K."/>
            <person name="Yokoi T."/>
            <person name="Furuya T."/>
            <person name="Kikkawa E."/>
            <person name="Omura Y."/>
            <person name="Abe K."/>
            <person name="Kamihara K."/>
            <person name="Katsuta N."/>
            <person name="Sato K."/>
            <person name="Tanikawa M."/>
            <person name="Yamazaki M."/>
            <person name="Ninomiya K."/>
            <person name="Ishibashi T."/>
            <person name="Yamashita H."/>
            <person name="Murakawa K."/>
            <person name="Fujimori K."/>
            <person name="Tanai H."/>
            <person name="Kimata M."/>
            <person name="Watanabe M."/>
            <person name="Hiraoka S."/>
            <person name="Chiba Y."/>
            <person name="Ishida S."/>
            <person name="Ono Y."/>
            <person name="Takiguchi S."/>
            <person name="Watanabe S."/>
            <person name="Yosida M."/>
            <person name="Hotuta T."/>
            <person name="Kusano J."/>
            <person name="Kanehori K."/>
            <person name="Takahashi-Fujii A."/>
            <person name="Hara H."/>
            <person name="Tanase T.-O."/>
            <person name="Nomura Y."/>
            <person name="Togiya S."/>
            <person name="Komai F."/>
            <person name="Hara R."/>
            <person name="Takeuchi K."/>
            <person name="Arita M."/>
            <person name="Imose N."/>
            <person name="Musashino K."/>
            <person name="Yuuki H."/>
            <person name="Oshima A."/>
            <person name="Sasaki N."/>
            <person name="Aotsuka S."/>
            <person name="Yoshikawa Y."/>
            <person name="Matsunawa H."/>
            <person name="Ichihara T."/>
            <person name="Shiohata N."/>
            <person name="Sano S."/>
            <person name="Moriya S."/>
            <person name="Momiyama H."/>
            <person name="Satoh N."/>
            <person name="Takami S."/>
            <person name="Terashima Y."/>
            <person name="Suzuki O."/>
            <person name="Nakagawa S."/>
            <person name="Senoh A."/>
            <person name="Mizoguchi H."/>
            <person name="Goto Y."/>
            <person name="Shimizu F."/>
            <person name="Wakebe H."/>
            <person name="Hishigaki H."/>
            <person name="Watanabe T."/>
            <person name="Sugiyama A."/>
            <person name="Takemoto M."/>
            <person name="Kawakami B."/>
            <person name="Yamazaki M."/>
            <person name="Watanabe K."/>
            <person name="Kumagai A."/>
            <person name="Itakura S."/>
            <person name="Fukuzumi Y."/>
            <person name="Fujimori Y."/>
            <person name="Komiyama M."/>
            <person name="Tashiro H."/>
            <person name="Tanigami A."/>
            <person name="Fujiwara T."/>
            <person name="Ono T."/>
            <person name="Yamada K."/>
            <person name="Fujii Y."/>
            <person name="Ozaki K."/>
            <person name="Hirao M."/>
            <person name="Ohmori Y."/>
            <person name="Kawabata A."/>
            <person name="Hikiji T."/>
            <person name="Kobatake N."/>
            <person name="Inagaki H."/>
            <person name="Ikema Y."/>
            <person name="Okamoto S."/>
            <person name="Okitani R."/>
            <person name="Kawakami T."/>
            <person name="Noguchi S."/>
            <person name="Itoh T."/>
            <person name="Shigeta K."/>
            <person name="Senba T."/>
            <person name="Matsumura K."/>
            <person name="Nakajima Y."/>
            <person name="Mizuno T."/>
            <person name="Morinaga M."/>
            <person name="Sasaki M."/>
            <person name="Togashi T."/>
            <person name="Oyama M."/>
            <person name="Hata H."/>
            <person name="Watanabe M."/>
            <person name="Komatsu T."/>
            <person name="Mizushima-Sugano J."/>
            <person name="Satoh T."/>
            <person name="Shirai Y."/>
            <person name="Takahashi Y."/>
            <person name="Nakagawa K."/>
            <person name="Okumura K."/>
            <person name="Nagase T."/>
            <person name="Nomura N."/>
            <person name="Kikuchi H."/>
            <person name="Masuho Y."/>
            <person name="Yamashita R."/>
            <person name="Nakai K."/>
            <person name="Yada T."/>
            <person name="Nakamura Y."/>
            <person name="Ohara O."/>
            <person name="Isogai T."/>
            <person name="Sugano S."/>
        </authorList>
    </citation>
    <scope>NUCLEOTIDE SEQUENCE [LARGE SCALE MRNA] OF 23-169</scope>
</reference>
<reference key="5">
    <citation type="journal article" date="1996" name="J. Biol. Chem.">
        <title>Membrane topology of the 12- and the 25-kDa subunits of the mammalian signal peptidase complex.</title>
        <authorList>
            <person name="Kalies K.-U."/>
            <person name="Hartmann E."/>
        </authorList>
    </citation>
    <scope>NUCLEOTIDE SEQUENCE [MRNA] OF 27-169</scope>
    <scope>TOPOLOGY</scope>
</reference>
<reference key="6">
    <citation type="journal article" date="2004" name="Genome Res.">
        <title>The status, quality, and expansion of the NIH full-length cDNA project: the Mammalian Gene Collection (MGC).</title>
        <authorList>
            <consortium name="The MGC Project Team"/>
        </authorList>
    </citation>
    <scope>NUCLEOTIDE SEQUENCE [LARGE SCALE MRNA] OF 32-169</scope>
    <source>
        <tissue>Cervix</tissue>
    </source>
</reference>
<reference key="7">
    <citation type="journal article" date="2011" name="BMC Syst. Biol.">
        <title>Initial characterization of the human central proteome.</title>
        <authorList>
            <person name="Burkard T.R."/>
            <person name="Planyavsky M."/>
            <person name="Kaupe I."/>
            <person name="Breitwieser F.P."/>
            <person name="Buerckstuemmer T."/>
            <person name="Bennett K.L."/>
            <person name="Superti-Furga G."/>
            <person name="Colinge J."/>
        </authorList>
    </citation>
    <scope>IDENTIFICATION BY MASS SPECTROMETRY [LARGE SCALE ANALYSIS]</scope>
</reference>
<reference key="8">
    <citation type="journal article" date="2013" name="J. Proteome Res.">
        <title>Toward a comprehensive characterization of a human cancer cell phosphoproteome.</title>
        <authorList>
            <person name="Zhou H."/>
            <person name="Di Palma S."/>
            <person name="Preisinger C."/>
            <person name="Peng M."/>
            <person name="Polat A.N."/>
            <person name="Heck A.J."/>
            <person name="Mohammed S."/>
        </authorList>
    </citation>
    <scope>IDENTIFICATION BY MASS SPECTROMETRY [LARGE SCALE ANALYSIS]</scope>
    <source>
        <tissue>Cervix carcinoma</tissue>
        <tissue>Erythroleukemia</tissue>
    </source>
</reference>
<reference key="9">
    <citation type="journal article" date="2013" name="Mol. Cell. Proteomics">
        <title>Large-scale top down proteomics of the human proteome: membrane proteins, mitochondria, and senescence.</title>
        <authorList>
            <person name="Catherman A.D."/>
            <person name="Durbin K.R."/>
            <person name="Ahlf D.R."/>
            <person name="Early B.P."/>
            <person name="Fellers R.T."/>
            <person name="Tran J.C."/>
            <person name="Thomas P.M."/>
            <person name="Kelleher N.L."/>
        </authorList>
    </citation>
    <scope>TRANSLATION INITIATION SITE</scope>
    <scope>IDENTIFICATION BY MASS SPECTROMETRY</scope>
</reference>
<reference key="10">
    <citation type="journal article" date="2013" name="PLoS Pathog.">
        <title>Signal peptidase complex subunit 1 participates in the assembly of hepatitis C virus through an interaction with E2 and NS2.</title>
        <authorList>
            <person name="Suzuki R."/>
            <person name="Matsuda M."/>
            <person name="Watashi K."/>
            <person name="Aizaki H."/>
            <person name="Matsuura Y."/>
            <person name="Wakita T."/>
            <person name="Suzuki T."/>
        </authorList>
    </citation>
    <scope>FUNCTION (MICROBIAL INFECTION)</scope>
    <scope>INTERACTION WITH HCV NS2 AND HCV E2 (MICROBIAL INFECTION)</scope>
</reference>
<reference key="11">
    <citation type="journal article" date="2015" name="Proteomics">
        <title>N-terminome analysis of the human mitochondrial proteome.</title>
        <authorList>
            <person name="Vaca Jacome A.S."/>
            <person name="Rabilloud T."/>
            <person name="Schaeffer-Reiss C."/>
            <person name="Rompais M."/>
            <person name="Ayoub D."/>
            <person name="Lane L."/>
            <person name="Bairoch A."/>
            <person name="Van Dorsselaer A."/>
            <person name="Carapito C."/>
        </authorList>
    </citation>
    <scope>IDENTIFICATION BY MASS SPECTROMETRY [LARGE SCALE ANALYSIS]</scope>
</reference>
<reference key="12">
    <citation type="journal article" date="2016" name="Nature">
        <title>A CRISPR screen defines a signal peptide processing pathway required by flaviviruses.</title>
        <authorList>
            <person name="Zhang R."/>
            <person name="Miner J.J."/>
            <person name="Gorman M.J."/>
            <person name="Rausch K."/>
            <person name="Ramage H."/>
            <person name="White J.P."/>
            <person name="Zuiani A."/>
            <person name="Zhang P."/>
            <person name="Fernandez E."/>
            <person name="Zhang Q."/>
            <person name="Dowd K.A."/>
            <person name="Pierson T.C."/>
            <person name="Cherry S."/>
            <person name="Diamond M.S."/>
        </authorList>
    </citation>
    <scope>FUNCTION (MICROBIAL INFECTION)</scope>
</reference>
<reference key="13">
    <citation type="journal article" date="2018" name="J. Virol.">
        <title>Host Factor SPCS1 Regulates the Replication of Japanese Encephalitis Virus through Interactions with Transmembrane Domains of NS2B.</title>
        <authorList>
            <person name="Ma L."/>
            <person name="Li F."/>
            <person name="Zhang J.W."/>
            <person name="Li W."/>
            <person name="Zhao D.M."/>
            <person name="Wang H."/>
            <person name="Hua R.H."/>
            <person name="Bu Z.G."/>
        </authorList>
    </citation>
    <scope>FUNCTION (MICROBIAL INFECTION)</scope>
    <scope>INTERACTION WITH JEV NS2B; WNV NS2B AND ZIKV NS2B (MICROBIAL INFECTION)</scope>
</reference>
<reference evidence="10 11" key="14">
    <citation type="journal article" date="2021" name="Mol. Cell">
        <title>Structure of the human signal peptidase complex reveals the determinants for signal peptide cleavage.</title>
        <authorList>
            <person name="Liaci A.M."/>
            <person name="Steigenberger B."/>
            <person name="Telles de Souza P.C."/>
            <person name="Tamara S."/>
            <person name="Groellers-Mulderij M."/>
            <person name="Ogrissek P."/>
            <person name="Marrink S.J."/>
            <person name="Scheltema R.A."/>
            <person name="Foerster F."/>
        </authorList>
    </citation>
    <scope>STRUCTURE BY ELECTRON MICROSCOPY (4.9 ANGSTROMS)</scope>
    <scope>FUNCTION</scope>
    <scope>IDENTIFICATION IN THE SIGNAL PEPTIDASE COMPLEX</scope>
    <scope>PHOSPHORYLATION</scope>
</reference>
<protein>
    <recommendedName>
        <fullName>Signal peptidase complex subunit 1</fullName>
    </recommendedName>
    <alternativeName>
        <fullName>Microsomal signal peptidase 12 kDa subunit</fullName>
        <shortName>SPase 12 kDa subunit</shortName>
    </alternativeName>
</protein>
<proteinExistence type="evidence at protein level"/>
<comment type="function">
    <text evidence="1 8">Component of the signal peptidase complex (SPC) which catalyzes the cleavage of N-terminal signal sequences from nascent proteins as they are translocated into the lumen of the endoplasmic reticulum (PubMed:34388369). Dispensable for SPC enzymatic activity (By similarity).</text>
</comment>
<comment type="function">
    <text evidence="5 6 7">(Microbial infection) Required for the post-translational processing of proteins involved in virion assembly and secretion from flaviviruses such as West Nile virus (WNV), Japanese encephalitis virus (JEV), Dengue virus type 2 (DENV-2), Yellow Fever virus (YFV), Zika virus (ZIKV) and hepatitis C virus (HCV) (PubMed:24009510, PubMed:27383988, PubMed:29593046). Plays a key role in the post-translational processing of flaviviral structural proteins prM, E, and NS1 (PubMed:27383988, PubMed:29593046). In HCV, it is involved in virion assembly where it promotes the interaction between HCV virus proteins NS2 and E2 (PubMed:24009510).</text>
</comment>
<comment type="subunit">
    <text evidence="8">Component of the signal peptidase complex paralog A (SPC-A) composed of a catalytic subunit SEC11A and three accessory subunits SPCS1, SPCS2 and SPCS3 (PubMed:34388369). Component of the signal peptidase complex paralog C (SPC-C) composed of a catalytic subunit SEC11C and three accessory subunits SPCS1, SPCS2 and SPCS3 (PubMed:34388369). Within the complex, interacts with SPCS2 and SPCS3 (PubMed:34388369). The complex induces a local thinning of the ER membrane which is used to measure the length of the signal peptide (SP) h-region of protein substrates (PubMed:34388369). This ensures the selectivity of the complex towards h-regions shorter than 18-20 amino acids (PubMed:34388369).</text>
</comment>
<comment type="subunit">
    <text evidence="5 7">(Microbial infection) Interacts with hepatitis C virus (HCV) proteins NS2 and E2 (PubMed:24009510). Interacts with NS2B from Japanese encephalitis virus (JEV), West Nile virus (WNV), and Zika virus (ZIKV) (PubMed:29593046).</text>
</comment>
<comment type="interaction">
    <interactant intactId="EBI-8852196">
        <id>Q9Y6A9</id>
    </interactant>
    <interactant intactId="EBI-6901449">
        <id>PRO_0000045596</id>
        <dbReference type="UniProtKB" id="Q99IB8"/>
    </interactant>
    <organismsDiffer>true</organismsDiffer>
    <experiments>4</experiments>
</comment>
<comment type="interaction">
    <interactant intactId="EBI-8852196">
        <id>Q9Y6A9</id>
    </interactant>
    <interactant intactId="EBI-6901421">
        <id>PRO_0000045598</id>
        <dbReference type="UniProtKB" id="Q99IB8"/>
    </interactant>
    <organismsDiffer>true</organismsDiffer>
    <experiments>7</experiments>
</comment>
<comment type="subcellular location">
    <subcellularLocation>
        <location evidence="2">Endoplasmic reticulum membrane</location>
        <topology evidence="2">Multi-pass membrane protein</topology>
    </subcellularLocation>
</comment>
<comment type="PTM">
    <text evidence="8">May be phosphorylated.</text>
</comment>
<comment type="similarity">
    <text evidence="9">Belongs to the SPCS1 family.</text>
</comment>
<comment type="sequence caution" evidence="9">
    <conflict type="frameshift">
        <sequence resource="EMBL-CDS" id="AAD40380"/>
    </conflict>
</comment>
<comment type="sequence caution" evidence="9">
    <conflict type="erroneous initiation">
        <sequence resource="EMBL-CDS" id="AAH00884"/>
    </conflict>
    <text>Truncated N-terminus.</text>
</comment>
<comment type="sequence caution" evidence="9">
    <conflict type="erroneous initiation">
        <sequence resource="EMBL-CDS" id="AAL31361"/>
    </conflict>
    <text>Truncated N-terminus.</text>
</comment>
<comment type="sequence caution" evidence="9">
    <conflict type="erroneous initiation">
        <sequence resource="EMBL-CDS" id="BAG51320"/>
    </conflict>
    <text>Truncated N-terminus.</text>
</comment>
<gene>
    <name type="primary">SPCS1</name>
    <name type="synonym">SPC12</name>
    <name type="ORF">HSPC033</name>
</gene>
<accession>Q9Y6A9</accession>
<accession>B3KNF8</accession>
<accession>Q9BVW1</accession>
<accession>X6R2S6</accession>
<keyword id="KW-0002">3D-structure</keyword>
<keyword id="KW-0256">Endoplasmic reticulum</keyword>
<keyword id="KW-0472">Membrane</keyword>
<keyword id="KW-0597">Phosphoprotein</keyword>
<keyword id="KW-1267">Proteomics identification</keyword>
<keyword id="KW-1185">Reference proteome</keyword>
<keyword id="KW-0812">Transmembrane</keyword>
<keyword id="KW-1133">Transmembrane helix</keyword>
<name>SPCS1_HUMAN</name>